<dbReference type="EMBL" id="AF035010">
    <property type="protein sequence ID" value="AAD02000.1"/>
    <property type="molecule type" value="Genomic_DNA"/>
</dbReference>
<dbReference type="SMR" id="Q9ZIB7"/>
<dbReference type="STRING" id="549.BEE12_17205"/>
<dbReference type="GO" id="GO:0005737">
    <property type="term" value="C:cytoplasm"/>
    <property type="evidence" value="ECO:0007669"/>
    <property type="project" value="UniProtKB-SubCell"/>
</dbReference>
<dbReference type="GO" id="GO:0005524">
    <property type="term" value="F:ATP binding"/>
    <property type="evidence" value="ECO:0007669"/>
    <property type="project" value="UniProtKB-KW"/>
</dbReference>
<dbReference type="GO" id="GO:0016887">
    <property type="term" value="F:ATP hydrolysis activity"/>
    <property type="evidence" value="ECO:0007669"/>
    <property type="project" value="InterPro"/>
</dbReference>
<dbReference type="GO" id="GO:0003677">
    <property type="term" value="F:DNA binding"/>
    <property type="evidence" value="ECO:0007669"/>
    <property type="project" value="UniProtKB-KW"/>
</dbReference>
<dbReference type="GO" id="GO:0009056">
    <property type="term" value="P:catabolic process"/>
    <property type="evidence" value="ECO:0007669"/>
    <property type="project" value="UniProtKB-KW"/>
</dbReference>
<dbReference type="GO" id="GO:0006355">
    <property type="term" value="P:regulation of DNA-templated transcription"/>
    <property type="evidence" value="ECO:0007669"/>
    <property type="project" value="InterPro"/>
</dbReference>
<dbReference type="CDD" id="cd00009">
    <property type="entry name" value="AAA"/>
    <property type="match status" value="1"/>
</dbReference>
<dbReference type="CDD" id="cd04877">
    <property type="entry name" value="ACT_TyrR"/>
    <property type="match status" value="1"/>
</dbReference>
<dbReference type="FunFam" id="3.40.50.300:FF:000006">
    <property type="entry name" value="DNA-binding transcriptional regulator NtrC"/>
    <property type="match status" value="1"/>
</dbReference>
<dbReference type="FunFam" id="1.10.10.60:FF:000112">
    <property type="entry name" value="TyrR family transcriptional regulator"/>
    <property type="match status" value="1"/>
</dbReference>
<dbReference type="Gene3D" id="1.10.8.60">
    <property type="match status" value="1"/>
</dbReference>
<dbReference type="Gene3D" id="3.30.70.260">
    <property type="match status" value="1"/>
</dbReference>
<dbReference type="Gene3D" id="1.10.10.60">
    <property type="entry name" value="Homeodomain-like"/>
    <property type="match status" value="1"/>
</dbReference>
<dbReference type="Gene3D" id="3.40.50.300">
    <property type="entry name" value="P-loop containing nucleotide triphosphate hydrolases"/>
    <property type="match status" value="1"/>
</dbReference>
<dbReference type="Gene3D" id="3.30.450.20">
    <property type="entry name" value="PAS domain"/>
    <property type="match status" value="1"/>
</dbReference>
<dbReference type="InterPro" id="IPR003593">
    <property type="entry name" value="AAA+_ATPase"/>
</dbReference>
<dbReference type="InterPro" id="IPR045865">
    <property type="entry name" value="ACT-like_dom_sf"/>
</dbReference>
<dbReference type="InterPro" id="IPR002912">
    <property type="entry name" value="ACT_dom"/>
</dbReference>
<dbReference type="InterPro" id="IPR009057">
    <property type="entry name" value="Homeodomain-like_sf"/>
</dbReference>
<dbReference type="InterPro" id="IPR030828">
    <property type="entry name" value="HTH_TyrR"/>
</dbReference>
<dbReference type="InterPro" id="IPR027417">
    <property type="entry name" value="P-loop_NTPase"/>
</dbReference>
<dbReference type="InterPro" id="IPR000014">
    <property type="entry name" value="PAS"/>
</dbReference>
<dbReference type="InterPro" id="IPR035965">
    <property type="entry name" value="PAS-like_dom_sf"/>
</dbReference>
<dbReference type="InterPro" id="IPR002078">
    <property type="entry name" value="Sigma_54_int"/>
</dbReference>
<dbReference type="InterPro" id="IPR025662">
    <property type="entry name" value="Sigma_54_int_dom_ATP-bd_1"/>
</dbReference>
<dbReference type="InterPro" id="IPR025943">
    <property type="entry name" value="Sigma_54_int_dom_ATP-bd_2"/>
</dbReference>
<dbReference type="InterPro" id="IPR025944">
    <property type="entry name" value="Sigma_54_int_dom_CS"/>
</dbReference>
<dbReference type="NCBIfam" id="TIGR04381">
    <property type="entry name" value="HTH_TypR"/>
    <property type="match status" value="1"/>
</dbReference>
<dbReference type="NCBIfam" id="NF008085">
    <property type="entry name" value="PRK10820.1"/>
    <property type="match status" value="1"/>
</dbReference>
<dbReference type="PANTHER" id="PTHR32071:SF3">
    <property type="entry name" value="HTH-TYPE TRANSCRIPTIONAL REGULATORY PROTEIN TYRR"/>
    <property type="match status" value="1"/>
</dbReference>
<dbReference type="PANTHER" id="PTHR32071">
    <property type="entry name" value="TRANSCRIPTIONAL REGULATORY PROTEIN"/>
    <property type="match status" value="1"/>
</dbReference>
<dbReference type="Pfam" id="PF18024">
    <property type="entry name" value="HTH_50"/>
    <property type="match status" value="1"/>
</dbReference>
<dbReference type="Pfam" id="PF00158">
    <property type="entry name" value="Sigma54_activat"/>
    <property type="match status" value="1"/>
</dbReference>
<dbReference type="SMART" id="SM00382">
    <property type="entry name" value="AAA"/>
    <property type="match status" value="1"/>
</dbReference>
<dbReference type="SMART" id="SM00091">
    <property type="entry name" value="PAS"/>
    <property type="match status" value="1"/>
</dbReference>
<dbReference type="SUPFAM" id="SSF55021">
    <property type="entry name" value="ACT-like"/>
    <property type="match status" value="1"/>
</dbReference>
<dbReference type="SUPFAM" id="SSF46689">
    <property type="entry name" value="Homeodomain-like"/>
    <property type="match status" value="1"/>
</dbReference>
<dbReference type="SUPFAM" id="SSF52540">
    <property type="entry name" value="P-loop containing nucleoside triphosphate hydrolases"/>
    <property type="match status" value="1"/>
</dbReference>
<dbReference type="SUPFAM" id="SSF55785">
    <property type="entry name" value="PYP-like sensor domain (PAS domain)"/>
    <property type="match status" value="1"/>
</dbReference>
<dbReference type="PROSITE" id="PS51671">
    <property type="entry name" value="ACT"/>
    <property type="match status" value="1"/>
</dbReference>
<dbReference type="PROSITE" id="PS00675">
    <property type="entry name" value="SIGMA54_INTERACT_1"/>
    <property type="match status" value="1"/>
</dbReference>
<dbReference type="PROSITE" id="PS00676">
    <property type="entry name" value="SIGMA54_INTERACT_2"/>
    <property type="match status" value="1"/>
</dbReference>
<dbReference type="PROSITE" id="PS00688">
    <property type="entry name" value="SIGMA54_INTERACT_3"/>
    <property type="match status" value="1"/>
</dbReference>
<dbReference type="PROSITE" id="PS50045">
    <property type="entry name" value="SIGMA54_INTERACT_4"/>
    <property type="match status" value="1"/>
</dbReference>
<protein>
    <recommendedName>
        <fullName evidence="7">HTH-type transcriptional regulatory protein TyrR</fullName>
    </recommendedName>
</protein>
<reference key="1">
    <citation type="journal article" date="2000" name="Appl. Environ. Microbiol.">
        <title>Cloning and random mutagenesis of the Erwinia herbicola tyrR gene for high-level expression of tyrosine phenol-lyase.</title>
        <authorList>
            <person name="Katayama T."/>
            <person name="Suzuki H."/>
            <person name="Koyanagi T."/>
            <person name="Kumagai H."/>
        </authorList>
    </citation>
    <scope>NUCLEOTIDE SEQUENCE [GENOMIC DNA]</scope>
    <scope>MUTAGENESIS OF VAL-67; TYR-72; ASP-97; GLU-201; ILE-402 AND VAL-499</scope>
    <source>
        <strain>ATCC 21434 / AJ 2985</strain>
    </source>
</reference>
<comment type="function">
    <text evidence="1">Dual transcriptional regulator of the TyrR regulon, which includes a number of genes coding for proteins involved in the biosynthesis or transport of the three aromatic amino acids, phenylalanine, tyrosine and tryptophan. These three aromatic amino acids act as effectors which bind to the TyrR protein to form an active regulatory protein. Acts by binding specifically to TyrR boxes in the promoter region of the target genes.</text>
</comment>
<comment type="subunit">
    <text evidence="1">Homodimer. In presence of tyrosine (or high concentrations of phenylalanine or tryptophan) and ATP, it self-associates to form an hexamer.</text>
</comment>
<comment type="subcellular location">
    <subcellularLocation>
        <location evidence="1">Cytoplasm</location>
    </subcellularLocation>
</comment>
<keyword id="KW-0010">Activator</keyword>
<keyword id="KW-0058">Aromatic hydrocarbons catabolism</keyword>
<keyword id="KW-0067">ATP-binding</keyword>
<keyword id="KW-0963">Cytoplasm</keyword>
<keyword id="KW-0238">DNA-binding</keyword>
<keyword id="KW-0547">Nucleotide-binding</keyword>
<keyword id="KW-0678">Repressor</keyword>
<keyword id="KW-0804">Transcription</keyword>
<keyword id="KW-0805">Transcription regulation</keyword>
<sequence length="521" mass="59023">MRLEVFCQDRIGLARELLDLLVARSIDLRGIEVAASGRIYLNFSTLEFEQFSNLMAEIRRTPGVTDVRTVPYMPSEREHRVLSALLVAMPEPVFSVDLRTKVELANPAAQNLFNLDENKIRNFTADHLINGFNFARWLESERVQAQAQHVVIEGRDFLMEAHPIYLSEDNDQADQLVGAMVMLKSTARMGRQLQNLVVTDETEFDHIVAVTPRMRQVVEQARKLAMHDAPLLIIGDTGTGKDMLARACHLRSARGKMPFLALNCASLPDDVAESELFGHAAGAYPNALEGKKGFFEQANGGSVLLDEIGEMSPTMQTKLLRFLNDGTFRRVGEEHEVHVNVRVICATQKNLFELVQRGEFREDLFYRLNVLTLNLPPLRERVQDIMPLTEIFVARFADEQGIPRPRLSSQLNAFLMRYNWPGNVRQLKNALYRALTQLEGHELRPQDIVLPEQALDVSLGEEAMEGTLDQITSRFERSILTRLYLSYPSTRKLAKRLGVSHTAIANKLREYGLGQKRGDNE</sequence>
<name>TYRR_ENTAG</name>
<organism>
    <name type="scientific">Enterobacter agglomerans</name>
    <name type="common">Erwinia herbicola</name>
    <name type="synonym">Pantoea agglomerans</name>
    <dbReference type="NCBI Taxonomy" id="549"/>
    <lineage>
        <taxon>Bacteria</taxon>
        <taxon>Pseudomonadati</taxon>
        <taxon>Pseudomonadota</taxon>
        <taxon>Gammaproteobacteria</taxon>
        <taxon>Enterobacterales</taxon>
        <taxon>Erwiniaceae</taxon>
        <taxon>Pantoea</taxon>
        <taxon>Pantoea agglomerans group</taxon>
    </lineage>
</organism>
<proteinExistence type="evidence at protein level"/>
<evidence type="ECO:0000250" key="1">
    <source>
        <dbReference type="UniProtKB" id="P07604"/>
    </source>
</evidence>
<evidence type="ECO:0000255" key="2">
    <source>
        <dbReference type="PROSITE-ProRule" id="PRU00140"/>
    </source>
</evidence>
<evidence type="ECO:0000255" key="3">
    <source>
        <dbReference type="PROSITE-ProRule" id="PRU00193"/>
    </source>
</evidence>
<evidence type="ECO:0000255" key="4">
    <source>
        <dbReference type="PROSITE-ProRule" id="PRU01007"/>
    </source>
</evidence>
<evidence type="ECO:0000269" key="5">
    <source>
    </source>
</evidence>
<evidence type="ECO:0000303" key="6">
    <source>
    </source>
</evidence>
<evidence type="ECO:0000305" key="7"/>
<gene>
    <name evidence="6" type="primary">tyrR</name>
</gene>
<accession>Q9ZIB7</accession>
<feature type="chain" id="PRO_0000081340" description="HTH-type transcriptional regulatory protein TyrR">
    <location>
        <begin position="1"/>
        <end position="521"/>
    </location>
</feature>
<feature type="domain" description="ACT" evidence="4">
    <location>
        <begin position="2"/>
        <end position="72"/>
    </location>
</feature>
<feature type="domain" description="PAS" evidence="2">
    <location>
        <begin position="78"/>
        <end position="120"/>
    </location>
</feature>
<feature type="domain" description="Sigma-54 factor interaction" evidence="3">
    <location>
        <begin position="207"/>
        <end position="436"/>
    </location>
</feature>
<feature type="DNA-binding region" description="H-T-H motif" evidence="1">
    <location>
        <begin position="489"/>
        <end position="509"/>
    </location>
</feature>
<feature type="binding site" evidence="3">
    <location>
        <begin position="235"/>
        <end position="242"/>
    </location>
    <ligand>
        <name>ATP</name>
        <dbReference type="ChEBI" id="CHEBI:30616"/>
    </ligand>
</feature>
<feature type="binding site" evidence="3">
    <location>
        <begin position="298"/>
        <end position="307"/>
    </location>
    <ligand>
        <name>ATP</name>
        <dbReference type="ChEBI" id="CHEBI:30616"/>
    </ligand>
</feature>
<feature type="mutagenesis site" description="Decrease in ability to repress DNA transcription. Loss of activity; when associated with C-72 and G-201." evidence="5">
    <original>V</original>
    <variation>A</variation>
    <location>
        <position position="67"/>
    </location>
</feature>
<feature type="mutagenesis site" description="Decrease in ability to repress DNA transcription. Loss of activity; when associated with A-67 and G-201." evidence="5">
    <original>Y</original>
    <variation>C</variation>
    <location>
        <position position="72"/>
    </location>
</feature>
<feature type="mutagenesis site" description="Decrease in ability to repress DNA transcription; when associated with V-402." evidence="5">
    <original>D</original>
    <variation>G</variation>
    <location>
        <position position="97"/>
    </location>
</feature>
<feature type="mutagenesis site" description="No effect. Loss of activity; when associated with A-67 and C-72." evidence="5">
    <original>E</original>
    <variation>G</variation>
    <location>
        <position position="201"/>
    </location>
</feature>
<feature type="mutagenesis site" description="Decrease in ability to repress DNA transcription; when associated with G-97." evidence="5">
    <original>I</original>
    <variation>V</variation>
    <location>
        <position position="402"/>
    </location>
</feature>
<feature type="mutagenesis site" description="No effect." evidence="5">
    <original>V</original>
    <variation>I</variation>
    <location>
        <position position="499"/>
    </location>
</feature>